<gene>
    <name evidence="1" type="primary">atpH</name>
    <name type="ordered locus">Neut_0274</name>
</gene>
<sequence length="178" mass="19402">MAEAITIARPYAEAVFRLAQGSGSLSLWSEMLGIVSSVIQESQVNALIGNPQIPSIKLREIVFSICDKELNEDGRRLISLLIENGRLLVLPQISELYEQLKAQHESVLEAEIVSAFPLESYQLEKLISVLEVKFQHKVKAQVSVDSGLIGGVKIEIGDQVIDSSVSGKLEAMAATLKS</sequence>
<name>ATPD_NITEC</name>
<accession>Q0AJB3</accession>
<dbReference type="EMBL" id="CP000450">
    <property type="protein sequence ID" value="ABI58558.1"/>
    <property type="molecule type" value="Genomic_DNA"/>
</dbReference>
<dbReference type="RefSeq" id="WP_011633402.1">
    <property type="nucleotide sequence ID" value="NC_008344.1"/>
</dbReference>
<dbReference type="SMR" id="Q0AJB3"/>
<dbReference type="STRING" id="335283.Neut_0274"/>
<dbReference type="KEGG" id="net:Neut_0274"/>
<dbReference type="eggNOG" id="COG0712">
    <property type="taxonomic scope" value="Bacteria"/>
</dbReference>
<dbReference type="HOGENOM" id="CLU_085114_3_0_4"/>
<dbReference type="OrthoDB" id="9816221at2"/>
<dbReference type="Proteomes" id="UP000001966">
    <property type="component" value="Chromosome"/>
</dbReference>
<dbReference type="GO" id="GO:0005886">
    <property type="term" value="C:plasma membrane"/>
    <property type="evidence" value="ECO:0007669"/>
    <property type="project" value="UniProtKB-SubCell"/>
</dbReference>
<dbReference type="GO" id="GO:0045259">
    <property type="term" value="C:proton-transporting ATP synthase complex"/>
    <property type="evidence" value="ECO:0007669"/>
    <property type="project" value="UniProtKB-KW"/>
</dbReference>
<dbReference type="GO" id="GO:0046933">
    <property type="term" value="F:proton-transporting ATP synthase activity, rotational mechanism"/>
    <property type="evidence" value="ECO:0007669"/>
    <property type="project" value="UniProtKB-UniRule"/>
</dbReference>
<dbReference type="Gene3D" id="1.10.520.20">
    <property type="entry name" value="N-terminal domain of the delta subunit of the F1F0-ATP synthase"/>
    <property type="match status" value="1"/>
</dbReference>
<dbReference type="HAMAP" id="MF_01416">
    <property type="entry name" value="ATP_synth_delta_bact"/>
    <property type="match status" value="1"/>
</dbReference>
<dbReference type="InterPro" id="IPR026015">
    <property type="entry name" value="ATP_synth_OSCP/delta_N_sf"/>
</dbReference>
<dbReference type="InterPro" id="IPR000711">
    <property type="entry name" value="ATPase_OSCP/dsu"/>
</dbReference>
<dbReference type="NCBIfam" id="TIGR01145">
    <property type="entry name" value="ATP_synt_delta"/>
    <property type="match status" value="1"/>
</dbReference>
<dbReference type="NCBIfam" id="NF004402">
    <property type="entry name" value="PRK05758.2-2"/>
    <property type="match status" value="1"/>
</dbReference>
<dbReference type="PANTHER" id="PTHR11910">
    <property type="entry name" value="ATP SYNTHASE DELTA CHAIN"/>
    <property type="match status" value="1"/>
</dbReference>
<dbReference type="Pfam" id="PF00213">
    <property type="entry name" value="OSCP"/>
    <property type="match status" value="1"/>
</dbReference>
<dbReference type="PRINTS" id="PR00125">
    <property type="entry name" value="ATPASEDELTA"/>
</dbReference>
<dbReference type="SUPFAM" id="SSF47928">
    <property type="entry name" value="N-terminal domain of the delta subunit of the F1F0-ATP synthase"/>
    <property type="match status" value="1"/>
</dbReference>
<organism>
    <name type="scientific">Nitrosomonas eutropha (strain DSM 101675 / C91 / Nm57)</name>
    <dbReference type="NCBI Taxonomy" id="335283"/>
    <lineage>
        <taxon>Bacteria</taxon>
        <taxon>Pseudomonadati</taxon>
        <taxon>Pseudomonadota</taxon>
        <taxon>Betaproteobacteria</taxon>
        <taxon>Nitrosomonadales</taxon>
        <taxon>Nitrosomonadaceae</taxon>
        <taxon>Nitrosomonas</taxon>
    </lineage>
</organism>
<keyword id="KW-0066">ATP synthesis</keyword>
<keyword id="KW-0997">Cell inner membrane</keyword>
<keyword id="KW-1003">Cell membrane</keyword>
<keyword id="KW-0139">CF(1)</keyword>
<keyword id="KW-0375">Hydrogen ion transport</keyword>
<keyword id="KW-0406">Ion transport</keyword>
<keyword id="KW-0472">Membrane</keyword>
<keyword id="KW-0813">Transport</keyword>
<protein>
    <recommendedName>
        <fullName evidence="1">ATP synthase subunit delta</fullName>
    </recommendedName>
    <alternativeName>
        <fullName evidence="1">ATP synthase F(1) sector subunit delta</fullName>
    </alternativeName>
    <alternativeName>
        <fullName evidence="1">F-type ATPase subunit delta</fullName>
        <shortName evidence="1">F-ATPase subunit delta</shortName>
    </alternativeName>
</protein>
<comment type="function">
    <text evidence="1">F(1)F(0) ATP synthase produces ATP from ADP in the presence of a proton or sodium gradient. F-type ATPases consist of two structural domains, F(1) containing the extramembraneous catalytic core and F(0) containing the membrane proton channel, linked together by a central stalk and a peripheral stalk. During catalysis, ATP synthesis in the catalytic domain of F(1) is coupled via a rotary mechanism of the central stalk subunits to proton translocation.</text>
</comment>
<comment type="function">
    <text evidence="1">This protein is part of the stalk that links CF(0) to CF(1). It either transmits conformational changes from CF(0) to CF(1) or is implicated in proton conduction.</text>
</comment>
<comment type="subunit">
    <text evidence="1">F-type ATPases have 2 components, F(1) - the catalytic core - and F(0) - the membrane proton channel. F(1) has five subunits: alpha(3), beta(3), gamma(1), delta(1), epsilon(1). F(0) has three main subunits: a(1), b(2) and c(10-14). The alpha and beta chains form an alternating ring which encloses part of the gamma chain. F(1) is attached to F(0) by a central stalk formed by the gamma and epsilon chains, while a peripheral stalk is formed by the delta and b chains.</text>
</comment>
<comment type="subcellular location">
    <subcellularLocation>
        <location evidence="1">Cell inner membrane</location>
        <topology evidence="1">Peripheral membrane protein</topology>
    </subcellularLocation>
</comment>
<comment type="similarity">
    <text evidence="1">Belongs to the ATPase delta chain family.</text>
</comment>
<proteinExistence type="inferred from homology"/>
<feature type="chain" id="PRO_0000371040" description="ATP synthase subunit delta">
    <location>
        <begin position="1"/>
        <end position="178"/>
    </location>
</feature>
<evidence type="ECO:0000255" key="1">
    <source>
        <dbReference type="HAMAP-Rule" id="MF_01416"/>
    </source>
</evidence>
<reference key="1">
    <citation type="journal article" date="2007" name="Environ. Microbiol.">
        <title>Whole-genome analysis of the ammonia-oxidizing bacterium, Nitrosomonas eutropha C91: implications for niche adaptation.</title>
        <authorList>
            <person name="Stein L.Y."/>
            <person name="Arp D.J."/>
            <person name="Berube P.M."/>
            <person name="Chain P.S."/>
            <person name="Hauser L."/>
            <person name="Jetten M.S."/>
            <person name="Klotz M.G."/>
            <person name="Larimer F.W."/>
            <person name="Norton J.M."/>
            <person name="Op den Camp H.J.M."/>
            <person name="Shin M."/>
            <person name="Wei X."/>
        </authorList>
    </citation>
    <scope>NUCLEOTIDE SEQUENCE [LARGE SCALE GENOMIC DNA]</scope>
    <source>
        <strain>DSM 101675 / C91 / Nm57</strain>
    </source>
</reference>